<sequence>MHILDSLDAASLRSDVPEFRAGDNLKVHVNIIEGNRSRVQVFQGFVLGRQGDGVRETFTVRKVSFGVGVERTFPVHSPIIEKIEVVTRGDVRRAKLYYMRDLRGKAAKIKEKRDNAPTKK</sequence>
<keyword id="KW-1185">Reference proteome</keyword>
<keyword id="KW-0687">Ribonucleoprotein</keyword>
<keyword id="KW-0689">Ribosomal protein</keyword>
<comment type="function">
    <text evidence="1">This protein is located at the 30S-50S ribosomal subunit interface and may play a role in the structure and function of the aminoacyl-tRNA binding site.</text>
</comment>
<comment type="similarity">
    <text evidence="1">Belongs to the bacterial ribosomal protein bL19 family.</text>
</comment>
<comment type="sequence caution" evidence="2">
    <conflict type="erroneous initiation">
        <sequence resource="EMBL-CDS" id="ABY22823"/>
    </conflict>
</comment>
<protein>
    <recommendedName>
        <fullName evidence="1">Large ribosomal subunit protein bL19</fullName>
    </recommendedName>
    <alternativeName>
        <fullName evidence="2">50S ribosomal protein L19</fullName>
    </alternativeName>
</protein>
<dbReference type="EMBL" id="CP000910">
    <property type="protein sequence ID" value="ABY22823.1"/>
    <property type="status" value="ALT_INIT"/>
    <property type="molecule type" value="Genomic_DNA"/>
</dbReference>
<dbReference type="RefSeq" id="WP_041684451.1">
    <property type="nucleotide sequence ID" value="NC_010168.1"/>
</dbReference>
<dbReference type="SMR" id="A9WP48"/>
<dbReference type="STRING" id="288705.RSal33209_1085"/>
<dbReference type="KEGG" id="rsa:RSal33209_1085"/>
<dbReference type="eggNOG" id="COG0335">
    <property type="taxonomic scope" value="Bacteria"/>
</dbReference>
<dbReference type="HOGENOM" id="CLU_103507_2_1_11"/>
<dbReference type="Proteomes" id="UP000002007">
    <property type="component" value="Chromosome"/>
</dbReference>
<dbReference type="GO" id="GO:0022625">
    <property type="term" value="C:cytosolic large ribosomal subunit"/>
    <property type="evidence" value="ECO:0007669"/>
    <property type="project" value="TreeGrafter"/>
</dbReference>
<dbReference type="GO" id="GO:0003735">
    <property type="term" value="F:structural constituent of ribosome"/>
    <property type="evidence" value="ECO:0007669"/>
    <property type="project" value="InterPro"/>
</dbReference>
<dbReference type="GO" id="GO:0006412">
    <property type="term" value="P:translation"/>
    <property type="evidence" value="ECO:0007669"/>
    <property type="project" value="UniProtKB-UniRule"/>
</dbReference>
<dbReference type="FunFam" id="2.30.30.790:FF:000001">
    <property type="entry name" value="50S ribosomal protein L19"/>
    <property type="match status" value="1"/>
</dbReference>
<dbReference type="Gene3D" id="2.30.30.790">
    <property type="match status" value="1"/>
</dbReference>
<dbReference type="HAMAP" id="MF_00402">
    <property type="entry name" value="Ribosomal_bL19"/>
    <property type="match status" value="1"/>
</dbReference>
<dbReference type="InterPro" id="IPR001857">
    <property type="entry name" value="Ribosomal_bL19"/>
</dbReference>
<dbReference type="InterPro" id="IPR018257">
    <property type="entry name" value="Ribosomal_bL19_CS"/>
</dbReference>
<dbReference type="InterPro" id="IPR038657">
    <property type="entry name" value="Ribosomal_bL19_sf"/>
</dbReference>
<dbReference type="InterPro" id="IPR008991">
    <property type="entry name" value="Translation_prot_SH3-like_sf"/>
</dbReference>
<dbReference type="NCBIfam" id="TIGR01024">
    <property type="entry name" value="rplS_bact"/>
    <property type="match status" value="1"/>
</dbReference>
<dbReference type="PANTHER" id="PTHR15680:SF9">
    <property type="entry name" value="LARGE RIBOSOMAL SUBUNIT PROTEIN BL19M"/>
    <property type="match status" value="1"/>
</dbReference>
<dbReference type="PANTHER" id="PTHR15680">
    <property type="entry name" value="RIBOSOMAL PROTEIN L19"/>
    <property type="match status" value="1"/>
</dbReference>
<dbReference type="Pfam" id="PF01245">
    <property type="entry name" value="Ribosomal_L19"/>
    <property type="match status" value="1"/>
</dbReference>
<dbReference type="PIRSF" id="PIRSF002191">
    <property type="entry name" value="Ribosomal_L19"/>
    <property type="match status" value="1"/>
</dbReference>
<dbReference type="PRINTS" id="PR00061">
    <property type="entry name" value="RIBOSOMALL19"/>
</dbReference>
<dbReference type="SUPFAM" id="SSF50104">
    <property type="entry name" value="Translation proteins SH3-like domain"/>
    <property type="match status" value="1"/>
</dbReference>
<dbReference type="PROSITE" id="PS01015">
    <property type="entry name" value="RIBOSOMAL_L19"/>
    <property type="match status" value="1"/>
</dbReference>
<reference key="1">
    <citation type="journal article" date="2008" name="J. Bacteriol.">
        <title>Genome sequence of the fish pathogen Renibacterium salmoninarum suggests reductive evolution away from an environmental Arthrobacter ancestor.</title>
        <authorList>
            <person name="Wiens G.D."/>
            <person name="Rockey D.D."/>
            <person name="Wu Z."/>
            <person name="Chang J."/>
            <person name="Levy R."/>
            <person name="Crane S."/>
            <person name="Chen D.S."/>
            <person name="Capri G.R."/>
            <person name="Burnett J.R."/>
            <person name="Sudheesh P.S."/>
            <person name="Schipma M.J."/>
            <person name="Burd H."/>
            <person name="Bhattacharyya A."/>
            <person name="Rhodes L.D."/>
            <person name="Kaul R."/>
            <person name="Strom M.S."/>
        </authorList>
    </citation>
    <scope>NUCLEOTIDE SEQUENCE [LARGE SCALE GENOMIC DNA]</scope>
    <source>
        <strain>ATCC 33209 / DSM 20767 / JCM 11484 / NBRC 15589 / NCIMB 2235</strain>
    </source>
</reference>
<accession>A9WP48</accession>
<feature type="chain" id="PRO_0000340744" description="Large ribosomal subunit protein bL19">
    <location>
        <begin position="1"/>
        <end position="120"/>
    </location>
</feature>
<organism>
    <name type="scientific">Renibacterium salmoninarum (strain ATCC 33209 / DSM 20767 / JCM 11484 / NBRC 15589 / NCIMB 2235)</name>
    <dbReference type="NCBI Taxonomy" id="288705"/>
    <lineage>
        <taxon>Bacteria</taxon>
        <taxon>Bacillati</taxon>
        <taxon>Actinomycetota</taxon>
        <taxon>Actinomycetes</taxon>
        <taxon>Micrococcales</taxon>
        <taxon>Micrococcaceae</taxon>
        <taxon>Renibacterium</taxon>
    </lineage>
</organism>
<name>RL19_RENSM</name>
<evidence type="ECO:0000255" key="1">
    <source>
        <dbReference type="HAMAP-Rule" id="MF_00402"/>
    </source>
</evidence>
<evidence type="ECO:0000305" key="2"/>
<gene>
    <name evidence="1" type="primary">rplS</name>
    <name type="ordered locus">RSal33209_1085</name>
</gene>
<proteinExistence type="inferred from homology"/>